<reference key="1">
    <citation type="journal article" date="2002" name="Proc. Natl. Acad. Sci. U.S.A.">
        <title>Genome sequence of Streptococcus mutans UA159, a cariogenic dental pathogen.</title>
        <authorList>
            <person name="Ajdic D.J."/>
            <person name="McShan W.M."/>
            <person name="McLaughlin R.E."/>
            <person name="Savic G."/>
            <person name="Chang J."/>
            <person name="Carson M.B."/>
            <person name="Primeaux C."/>
            <person name="Tian R."/>
            <person name="Kenton S."/>
            <person name="Jia H.G."/>
            <person name="Lin S.P."/>
            <person name="Qian Y."/>
            <person name="Li S."/>
            <person name="Zhu H."/>
            <person name="Najar F.Z."/>
            <person name="Lai H."/>
            <person name="White J."/>
            <person name="Roe B.A."/>
            <person name="Ferretti J.J."/>
        </authorList>
    </citation>
    <scope>NUCLEOTIDE SEQUENCE [LARGE SCALE GENOMIC DNA]</scope>
    <source>
        <strain>ATCC 700610 / UA159</strain>
    </source>
</reference>
<keyword id="KW-0030">Aminoacyl-tRNA synthetase</keyword>
<keyword id="KW-0067">ATP-binding</keyword>
<keyword id="KW-0963">Cytoplasm</keyword>
<keyword id="KW-0436">Ligase</keyword>
<keyword id="KW-0547">Nucleotide-binding</keyword>
<keyword id="KW-0648">Protein biosynthesis</keyword>
<keyword id="KW-1185">Reference proteome</keyword>
<sequence>MVYYNHKAIENKWQKFWEDNHTFKTGTASSKPKFYALDMFPYPSGAGLHVGHPEGYTATDILSRFKRAQGYNVLHPMGWDAFGLPAEQYAMDTGHDPADFTAQNIATFKRQIKSLGFSYDWDREINTTDPNYYKWTQWIFTKLYEKGLAYEAEVPVNWVEELGTAIANEEVLPDGTSERGGYPVVRKPMRQWMLKITAYAERLLEDLEDLDWPESIKDMQRNWIGKSTGANVTFKVKDTDEEFTVFTTRPDTLFGATYAVLAPEHDLVDIITTAGQAQAVADYKHQASLKSDLARTDLAKEKTGVWTGAYAINPVNGKEIPIWIADYVLASYGTGAIMAVPAHDERDWEFAKQFNLDIIPVLEGGNVAEAAYTDDGLHINSGFLNGLDKAAAIDKMVTWLETEGVGNKKVTYRLRDWLFSRQRYWGEPIPIIHWEDGTSTALPENELPLVLPVTKDIKPSGTGESPLANLTDWLEVTREDGVKGRRETNTMPQWAGSSWYFLRYIDPHNDQKLADEDLLKQWLPVDVYVGGAEHAVLHLLYARFWHKFLYDLGVVPTKEPFQKLFNQGMILGTSYRDHRGALVATDKVEKRDGSFFNIETDEELEQAPAKMSKSLKNVVNPDDVVEQYGADTLRVYEMFMGPLDASIAWSEEGLEGSRKFLDRVYRLITTKEIAAKNNGHLDKVYNEVVKTVTEHLEAMRFNTAISQLMIFVNAANKEEQLFLDYAKGFIQLLAPFAPHLAEELWQFLTQSGQSITYVAWPSYDESKLVEDEIEIVLQIKGKVRAKVVVSKDSSREDLEKIALANDKIQAEVAGKDIVKVIAVPNKLVNIVIK</sequence>
<accession>Q8DS85</accession>
<comment type="catalytic activity">
    <reaction evidence="1">
        <text>tRNA(Leu) + L-leucine + ATP = L-leucyl-tRNA(Leu) + AMP + diphosphate</text>
        <dbReference type="Rhea" id="RHEA:11688"/>
        <dbReference type="Rhea" id="RHEA-COMP:9613"/>
        <dbReference type="Rhea" id="RHEA-COMP:9622"/>
        <dbReference type="ChEBI" id="CHEBI:30616"/>
        <dbReference type="ChEBI" id="CHEBI:33019"/>
        <dbReference type="ChEBI" id="CHEBI:57427"/>
        <dbReference type="ChEBI" id="CHEBI:78442"/>
        <dbReference type="ChEBI" id="CHEBI:78494"/>
        <dbReference type="ChEBI" id="CHEBI:456215"/>
        <dbReference type="EC" id="6.1.1.4"/>
    </reaction>
</comment>
<comment type="subcellular location">
    <subcellularLocation>
        <location evidence="1">Cytoplasm</location>
    </subcellularLocation>
</comment>
<comment type="similarity">
    <text evidence="1">Belongs to the class-I aminoacyl-tRNA synthetase family.</text>
</comment>
<evidence type="ECO:0000255" key="1">
    <source>
        <dbReference type="HAMAP-Rule" id="MF_00049"/>
    </source>
</evidence>
<organism>
    <name type="scientific">Streptococcus mutans serotype c (strain ATCC 700610 / UA159)</name>
    <dbReference type="NCBI Taxonomy" id="210007"/>
    <lineage>
        <taxon>Bacteria</taxon>
        <taxon>Bacillati</taxon>
        <taxon>Bacillota</taxon>
        <taxon>Bacilli</taxon>
        <taxon>Lactobacillales</taxon>
        <taxon>Streptococcaceae</taxon>
        <taxon>Streptococcus</taxon>
    </lineage>
</organism>
<dbReference type="EC" id="6.1.1.4" evidence="1"/>
<dbReference type="EMBL" id="AE014133">
    <property type="protein sequence ID" value="AAN59553.1"/>
    <property type="molecule type" value="Genomic_DNA"/>
</dbReference>
<dbReference type="RefSeq" id="NP_722247.1">
    <property type="nucleotide sequence ID" value="NC_004350.2"/>
</dbReference>
<dbReference type="RefSeq" id="WP_002263843.1">
    <property type="nucleotide sequence ID" value="NC_004350.2"/>
</dbReference>
<dbReference type="SMR" id="Q8DS85"/>
<dbReference type="STRING" id="210007.SMU_1943"/>
<dbReference type="KEGG" id="smu:SMU_1943"/>
<dbReference type="PATRIC" id="fig|210007.7.peg.1728"/>
<dbReference type="eggNOG" id="COG0495">
    <property type="taxonomic scope" value="Bacteria"/>
</dbReference>
<dbReference type="HOGENOM" id="CLU_004427_0_0_9"/>
<dbReference type="OrthoDB" id="9810365at2"/>
<dbReference type="PhylomeDB" id="Q8DS85"/>
<dbReference type="Proteomes" id="UP000002512">
    <property type="component" value="Chromosome"/>
</dbReference>
<dbReference type="GO" id="GO:0005829">
    <property type="term" value="C:cytosol"/>
    <property type="evidence" value="ECO:0007669"/>
    <property type="project" value="TreeGrafter"/>
</dbReference>
<dbReference type="GO" id="GO:0002161">
    <property type="term" value="F:aminoacyl-tRNA deacylase activity"/>
    <property type="evidence" value="ECO:0007669"/>
    <property type="project" value="InterPro"/>
</dbReference>
<dbReference type="GO" id="GO:0005524">
    <property type="term" value="F:ATP binding"/>
    <property type="evidence" value="ECO:0007669"/>
    <property type="project" value="UniProtKB-UniRule"/>
</dbReference>
<dbReference type="GO" id="GO:0004823">
    <property type="term" value="F:leucine-tRNA ligase activity"/>
    <property type="evidence" value="ECO:0007669"/>
    <property type="project" value="UniProtKB-UniRule"/>
</dbReference>
<dbReference type="GO" id="GO:0006429">
    <property type="term" value="P:leucyl-tRNA aminoacylation"/>
    <property type="evidence" value="ECO:0007669"/>
    <property type="project" value="UniProtKB-UniRule"/>
</dbReference>
<dbReference type="CDD" id="cd07958">
    <property type="entry name" value="Anticodon_Ia_Leu_BEm"/>
    <property type="match status" value="1"/>
</dbReference>
<dbReference type="CDD" id="cd00812">
    <property type="entry name" value="LeuRS_core"/>
    <property type="match status" value="1"/>
</dbReference>
<dbReference type="FunFam" id="1.10.730.10:FF:000012">
    <property type="entry name" value="Leucine--tRNA ligase"/>
    <property type="match status" value="1"/>
</dbReference>
<dbReference type="FunFam" id="3.40.50.620:FF:000056">
    <property type="entry name" value="Leucine--tRNA ligase"/>
    <property type="match status" value="1"/>
</dbReference>
<dbReference type="FunFam" id="3.40.50.620:FF:000077">
    <property type="entry name" value="Leucine--tRNA ligase"/>
    <property type="match status" value="1"/>
</dbReference>
<dbReference type="FunFam" id="1.10.730.10:FF:000011">
    <property type="entry name" value="Leucine--tRNA ligase chloroplastic/mitochondrial"/>
    <property type="match status" value="1"/>
</dbReference>
<dbReference type="Gene3D" id="3.40.50.620">
    <property type="entry name" value="HUPs"/>
    <property type="match status" value="2"/>
</dbReference>
<dbReference type="Gene3D" id="1.10.730.10">
    <property type="entry name" value="Isoleucyl-tRNA Synthetase, Domain 1"/>
    <property type="match status" value="2"/>
</dbReference>
<dbReference type="HAMAP" id="MF_00049_B">
    <property type="entry name" value="Leu_tRNA_synth_B"/>
    <property type="match status" value="1"/>
</dbReference>
<dbReference type="InterPro" id="IPR001412">
    <property type="entry name" value="aa-tRNA-synth_I_CS"/>
</dbReference>
<dbReference type="InterPro" id="IPR002300">
    <property type="entry name" value="aa-tRNA-synth_Ia"/>
</dbReference>
<dbReference type="InterPro" id="IPR002302">
    <property type="entry name" value="Leu-tRNA-ligase"/>
</dbReference>
<dbReference type="InterPro" id="IPR025709">
    <property type="entry name" value="Leu_tRNA-synth_edit"/>
</dbReference>
<dbReference type="InterPro" id="IPR013155">
    <property type="entry name" value="M/V/L/I-tRNA-synth_anticd-bd"/>
</dbReference>
<dbReference type="InterPro" id="IPR015413">
    <property type="entry name" value="Methionyl/Leucyl_tRNA_Synth"/>
</dbReference>
<dbReference type="InterPro" id="IPR014729">
    <property type="entry name" value="Rossmann-like_a/b/a_fold"/>
</dbReference>
<dbReference type="InterPro" id="IPR009080">
    <property type="entry name" value="tRNAsynth_Ia_anticodon-bd"/>
</dbReference>
<dbReference type="InterPro" id="IPR009008">
    <property type="entry name" value="Val/Leu/Ile-tRNA-synth_edit"/>
</dbReference>
<dbReference type="NCBIfam" id="TIGR00396">
    <property type="entry name" value="leuS_bact"/>
    <property type="match status" value="1"/>
</dbReference>
<dbReference type="PANTHER" id="PTHR43740:SF2">
    <property type="entry name" value="LEUCINE--TRNA LIGASE, MITOCHONDRIAL"/>
    <property type="match status" value="1"/>
</dbReference>
<dbReference type="PANTHER" id="PTHR43740">
    <property type="entry name" value="LEUCYL-TRNA SYNTHETASE"/>
    <property type="match status" value="1"/>
</dbReference>
<dbReference type="Pfam" id="PF08264">
    <property type="entry name" value="Anticodon_1"/>
    <property type="match status" value="1"/>
</dbReference>
<dbReference type="Pfam" id="PF00133">
    <property type="entry name" value="tRNA-synt_1"/>
    <property type="match status" value="2"/>
</dbReference>
<dbReference type="Pfam" id="PF13603">
    <property type="entry name" value="tRNA-synt_1_2"/>
    <property type="match status" value="1"/>
</dbReference>
<dbReference type="Pfam" id="PF09334">
    <property type="entry name" value="tRNA-synt_1g"/>
    <property type="match status" value="1"/>
</dbReference>
<dbReference type="PRINTS" id="PR00985">
    <property type="entry name" value="TRNASYNTHLEU"/>
</dbReference>
<dbReference type="SUPFAM" id="SSF47323">
    <property type="entry name" value="Anticodon-binding domain of a subclass of class I aminoacyl-tRNA synthetases"/>
    <property type="match status" value="1"/>
</dbReference>
<dbReference type="SUPFAM" id="SSF52374">
    <property type="entry name" value="Nucleotidylyl transferase"/>
    <property type="match status" value="1"/>
</dbReference>
<dbReference type="SUPFAM" id="SSF50677">
    <property type="entry name" value="ValRS/IleRS/LeuRS editing domain"/>
    <property type="match status" value="1"/>
</dbReference>
<dbReference type="PROSITE" id="PS00178">
    <property type="entry name" value="AA_TRNA_LIGASE_I"/>
    <property type="match status" value="1"/>
</dbReference>
<proteinExistence type="inferred from homology"/>
<feature type="chain" id="PRO_0000152094" description="Leucine--tRNA ligase">
    <location>
        <begin position="1"/>
        <end position="833"/>
    </location>
</feature>
<feature type="short sequence motif" description="'HIGH' region">
    <location>
        <begin position="41"/>
        <end position="52"/>
    </location>
</feature>
<feature type="short sequence motif" description="'KMSKS' region">
    <location>
        <begin position="610"/>
        <end position="614"/>
    </location>
</feature>
<feature type="binding site" evidence="1">
    <location>
        <position position="613"/>
    </location>
    <ligand>
        <name>ATP</name>
        <dbReference type="ChEBI" id="CHEBI:30616"/>
    </ligand>
</feature>
<protein>
    <recommendedName>
        <fullName evidence="1">Leucine--tRNA ligase</fullName>
        <ecNumber evidence="1">6.1.1.4</ecNumber>
    </recommendedName>
    <alternativeName>
        <fullName evidence="1">Leucyl-tRNA synthetase</fullName>
        <shortName evidence="1">LeuRS</shortName>
    </alternativeName>
</protein>
<gene>
    <name evidence="1" type="primary">leuS</name>
    <name type="ordered locus">SMU_1943</name>
</gene>
<name>SYL_STRMU</name>